<keyword id="KW-0472">Membrane</keyword>
<keyword id="KW-0602">Photosynthesis</keyword>
<keyword id="KW-1185">Reference proteome</keyword>
<keyword id="KW-0793">Thylakoid</keyword>
<keyword id="KW-0812">Transmembrane</keyword>
<keyword id="KW-1133">Transmembrane helix</keyword>
<dbReference type="EMBL" id="Z27404">
    <property type="protein sequence ID" value="CAA81793.1"/>
    <property type="status" value="ALT_FRAME"/>
    <property type="molecule type" value="Genomic_DNA"/>
</dbReference>
<dbReference type="EMBL" id="BA000022">
    <property type="protein sequence ID" value="BAA16712.1"/>
    <property type="molecule type" value="Genomic_DNA"/>
</dbReference>
<dbReference type="PIR" id="S74560">
    <property type="entry name" value="S74560"/>
</dbReference>
<dbReference type="IntAct" id="P72705">
    <property type="interactions" value="3"/>
</dbReference>
<dbReference type="STRING" id="1148.gene:10497567"/>
<dbReference type="PaxDb" id="1148-1651785"/>
<dbReference type="EnsemblBacteria" id="BAA16712">
    <property type="protein sequence ID" value="BAA16712"/>
    <property type="gene ID" value="BAA16712"/>
</dbReference>
<dbReference type="KEGG" id="syn:sll0226"/>
<dbReference type="eggNOG" id="ENOG502Z7YX">
    <property type="taxonomic scope" value="Bacteria"/>
</dbReference>
<dbReference type="InParanoid" id="P72705"/>
<dbReference type="Proteomes" id="UP000001425">
    <property type="component" value="Chromosome"/>
</dbReference>
<dbReference type="GO" id="GO:0009522">
    <property type="term" value="C:photosystem I"/>
    <property type="evidence" value="ECO:0007669"/>
    <property type="project" value="InterPro"/>
</dbReference>
<dbReference type="GO" id="GO:0031676">
    <property type="term" value="C:plasma membrane-derived thylakoid membrane"/>
    <property type="evidence" value="ECO:0007669"/>
    <property type="project" value="UniProtKB-SubCell"/>
</dbReference>
<dbReference type="GO" id="GO:0015979">
    <property type="term" value="P:photosynthesis"/>
    <property type="evidence" value="ECO:0007669"/>
    <property type="project" value="UniProtKB-UniRule"/>
</dbReference>
<dbReference type="HAMAP" id="MF_00437">
    <property type="entry name" value="Ycf4"/>
    <property type="match status" value="1"/>
</dbReference>
<dbReference type="InterPro" id="IPR003359">
    <property type="entry name" value="PSI_Ycf4_assembly"/>
</dbReference>
<dbReference type="NCBIfam" id="NF002712">
    <property type="entry name" value="PRK02542.1"/>
    <property type="match status" value="1"/>
</dbReference>
<dbReference type="PANTHER" id="PTHR33288">
    <property type="match status" value="1"/>
</dbReference>
<dbReference type="PANTHER" id="PTHR33288:SF4">
    <property type="entry name" value="PHOTOSYSTEM I ASSEMBLY PROTEIN YCF4"/>
    <property type="match status" value="1"/>
</dbReference>
<dbReference type="Pfam" id="PF02392">
    <property type="entry name" value="Ycf4"/>
    <property type="match status" value="1"/>
</dbReference>
<evidence type="ECO:0000255" key="1">
    <source>
        <dbReference type="HAMAP-Rule" id="MF_00437"/>
    </source>
</evidence>
<evidence type="ECO:0000305" key="2"/>
<gene>
    <name evidence="1" type="primary">ycf4</name>
    <name type="ordered locus">sll0226</name>
</gene>
<protein>
    <recommendedName>
        <fullName evidence="1">Photosystem I assembly protein Ycf4</fullName>
    </recommendedName>
</protein>
<reference key="1">
    <citation type="journal article" date="1995" name="Plant Cell">
        <title>Inactivation of a Synechocystis sp strain PCC 6803 gene with homology to conserved chloroplast open reading frame 184 increases the photosystem II-to-photosystem I ratio.</title>
        <authorList>
            <person name="Wilde A."/>
            <person name="Hartel H."/>
            <person name="Hubschmann T."/>
            <person name="Hoffman P."/>
            <person name="Shestakov S.V."/>
            <person name="Borner T."/>
        </authorList>
    </citation>
    <scope>NUCLEOTIDE SEQUENCE [GENOMIC DNA]</scope>
</reference>
<reference key="2">
    <citation type="journal article" date="1996" name="DNA Res.">
        <title>Sequence analysis of the genome of the unicellular cyanobacterium Synechocystis sp. strain PCC6803. II. Sequence determination of the entire genome and assignment of potential protein-coding regions.</title>
        <authorList>
            <person name="Kaneko T."/>
            <person name="Sato S."/>
            <person name="Kotani H."/>
            <person name="Tanaka A."/>
            <person name="Asamizu E."/>
            <person name="Nakamura Y."/>
            <person name="Miyajima N."/>
            <person name="Hirosawa M."/>
            <person name="Sugiura M."/>
            <person name="Sasamoto S."/>
            <person name="Kimura T."/>
            <person name="Hosouchi T."/>
            <person name="Matsuno A."/>
            <person name="Muraki A."/>
            <person name="Nakazaki N."/>
            <person name="Naruo K."/>
            <person name="Okumura S."/>
            <person name="Shimpo S."/>
            <person name="Takeuchi C."/>
            <person name="Wada T."/>
            <person name="Watanabe A."/>
            <person name="Yamada M."/>
            <person name="Yasuda M."/>
            <person name="Tabata S."/>
        </authorList>
    </citation>
    <scope>NUCLEOTIDE SEQUENCE [LARGE SCALE GENOMIC DNA]</scope>
    <source>
        <strain>ATCC 27184 / PCC 6803 / Kazusa</strain>
    </source>
</reference>
<name>YCF4_SYNY3</name>
<accession>P72705</accession>
<accession>Q55299</accession>
<organism>
    <name type="scientific">Synechocystis sp. (strain ATCC 27184 / PCC 6803 / Kazusa)</name>
    <dbReference type="NCBI Taxonomy" id="1111708"/>
    <lineage>
        <taxon>Bacteria</taxon>
        <taxon>Bacillati</taxon>
        <taxon>Cyanobacteriota</taxon>
        <taxon>Cyanophyceae</taxon>
        <taxon>Synechococcales</taxon>
        <taxon>Merismopediaceae</taxon>
        <taxon>Synechocystis</taxon>
    </lineage>
</organism>
<feature type="chain" id="PRO_0000217640" description="Photosystem I assembly protein Ycf4">
    <location>
        <begin position="1"/>
        <end position="188"/>
    </location>
</feature>
<feature type="transmembrane region" description="Helical" evidence="1">
    <location>
        <begin position="26"/>
        <end position="48"/>
    </location>
</feature>
<feature type="transmembrane region" description="Helical" evidence="1">
    <location>
        <begin position="63"/>
        <end position="85"/>
    </location>
</feature>
<comment type="function">
    <text>Seems to be required for the assembly of the photosystem I complex.</text>
</comment>
<comment type="subcellular location">
    <subcellularLocation>
        <location evidence="1">Cellular thylakoid membrane</location>
        <topology evidence="1">Multi-pass membrane protein</topology>
    </subcellularLocation>
</comment>
<comment type="similarity">
    <text evidence="1">Belongs to the Ycf4 family.</text>
</comment>
<comment type="sequence caution" evidence="2">
    <conflict type="frameshift">
        <sequence resource="EMBL-CDS" id="CAA81793"/>
    </conflict>
</comment>
<sequence length="188" mass="20454">MGGQTLAESSQVLRQEVLGARRFSNFFWAGISTIGGVGFLLAGLSSYFGKNLLIVSDTTGLQFIPQGVALLFYGVAGSTVAGYLWLTMALNVGSGYNEFNKKSGQVTIFRWGFPGKNRRIELINKIADVQAVKAEIKEGVNPKRSLYLKVKQRRDIPLTRAGQPISLSQLENQGAELARFLGVPLEGL</sequence>
<proteinExistence type="inferred from homology"/>